<evidence type="ECO:0000255" key="1">
    <source>
        <dbReference type="HAMAP-Rule" id="MF_02095"/>
    </source>
</evidence>
<evidence type="ECO:0000305" key="2"/>
<reference key="1">
    <citation type="journal article" date="2001" name="Nature">
        <title>Genome sequence of enterohaemorrhagic Escherichia coli O157:H7.</title>
        <authorList>
            <person name="Perna N.T."/>
            <person name="Plunkett G. III"/>
            <person name="Burland V."/>
            <person name="Mau B."/>
            <person name="Glasner J.D."/>
            <person name="Rose D.J."/>
            <person name="Mayhew G.F."/>
            <person name="Evans P.S."/>
            <person name="Gregor J."/>
            <person name="Kirkpatrick H.A."/>
            <person name="Posfai G."/>
            <person name="Hackett J."/>
            <person name="Klink S."/>
            <person name="Boutin A."/>
            <person name="Shao Y."/>
            <person name="Miller L."/>
            <person name="Grotbeck E.J."/>
            <person name="Davis N.W."/>
            <person name="Lim A."/>
            <person name="Dimalanta E.T."/>
            <person name="Potamousis K."/>
            <person name="Apodaca J."/>
            <person name="Anantharaman T.S."/>
            <person name="Lin J."/>
            <person name="Yen G."/>
            <person name="Schwartz D.C."/>
            <person name="Welch R.A."/>
            <person name="Blattner F.R."/>
        </authorList>
    </citation>
    <scope>NUCLEOTIDE SEQUENCE [LARGE SCALE GENOMIC DNA]</scope>
    <source>
        <strain>O157:H7 / EDL933 / ATCC 700927 / EHEC</strain>
    </source>
</reference>
<reference key="2">
    <citation type="journal article" date="2001" name="DNA Res.">
        <title>Complete genome sequence of enterohemorrhagic Escherichia coli O157:H7 and genomic comparison with a laboratory strain K-12.</title>
        <authorList>
            <person name="Hayashi T."/>
            <person name="Makino K."/>
            <person name="Ohnishi M."/>
            <person name="Kurokawa K."/>
            <person name="Ishii K."/>
            <person name="Yokoyama K."/>
            <person name="Han C.-G."/>
            <person name="Ohtsubo E."/>
            <person name="Nakayama K."/>
            <person name="Murata T."/>
            <person name="Tanaka M."/>
            <person name="Tobe T."/>
            <person name="Iida T."/>
            <person name="Takami H."/>
            <person name="Honda T."/>
            <person name="Sasakawa C."/>
            <person name="Ogasawara N."/>
            <person name="Yasunaga T."/>
            <person name="Kuhara S."/>
            <person name="Shiba T."/>
            <person name="Hattori M."/>
            <person name="Shinagawa H."/>
        </authorList>
    </citation>
    <scope>NUCLEOTIDE SEQUENCE [LARGE SCALE GENOMIC DNA]</scope>
    <source>
        <strain>O157:H7 / Sakai / RIMD 0509952 / EHEC</strain>
    </source>
</reference>
<protein>
    <recommendedName>
        <fullName evidence="1">3'(2'),5'-bisphosphate nucleotidase CysQ</fullName>
        <ecNumber evidence="1">3.1.3.7</ecNumber>
    </recommendedName>
    <alternativeName>
        <fullName evidence="1">3'(2'),5-bisphosphonucleoside 3'(2')-phosphohydrolase</fullName>
    </alternativeName>
    <alternativeName>
        <fullName evidence="1">3'-phosphoadenosine 5'-phosphate phosphatase</fullName>
        <shortName evidence="1">PAP phosphatase</shortName>
    </alternativeName>
</protein>
<dbReference type="EC" id="3.1.3.7" evidence="1"/>
<dbReference type="EMBL" id="AE005174">
    <property type="protein sequence ID" value="AAG59412.1"/>
    <property type="molecule type" value="Genomic_DNA"/>
</dbReference>
<dbReference type="EMBL" id="BA000007">
    <property type="protein sequence ID" value="BAB38615.1"/>
    <property type="molecule type" value="Genomic_DNA"/>
</dbReference>
<dbReference type="PIR" id="H86118">
    <property type="entry name" value="H86118"/>
</dbReference>
<dbReference type="PIR" id="H91277">
    <property type="entry name" value="H91277"/>
</dbReference>
<dbReference type="RefSeq" id="NP_313219.1">
    <property type="nucleotide sequence ID" value="NC_002695.1"/>
</dbReference>
<dbReference type="RefSeq" id="WP_000886884.1">
    <property type="nucleotide sequence ID" value="NZ_VOAI01000023.1"/>
</dbReference>
<dbReference type="SMR" id="Q8XCG6"/>
<dbReference type="STRING" id="155864.Z5825"/>
<dbReference type="GeneID" id="913943"/>
<dbReference type="KEGG" id="ece:Z5825"/>
<dbReference type="KEGG" id="ecs:ECs_5192"/>
<dbReference type="PATRIC" id="fig|386585.9.peg.5427"/>
<dbReference type="eggNOG" id="COG1218">
    <property type="taxonomic scope" value="Bacteria"/>
</dbReference>
<dbReference type="HOGENOM" id="CLU_044118_3_0_6"/>
<dbReference type="OMA" id="WLWILDP"/>
<dbReference type="Proteomes" id="UP000000558">
    <property type="component" value="Chromosome"/>
</dbReference>
<dbReference type="Proteomes" id="UP000002519">
    <property type="component" value="Chromosome"/>
</dbReference>
<dbReference type="GO" id="GO:0005886">
    <property type="term" value="C:plasma membrane"/>
    <property type="evidence" value="ECO:0007669"/>
    <property type="project" value="UniProtKB-SubCell"/>
</dbReference>
<dbReference type="GO" id="GO:0008441">
    <property type="term" value="F:3'(2'),5'-bisphosphate nucleotidase activity"/>
    <property type="evidence" value="ECO:0007669"/>
    <property type="project" value="UniProtKB-UniRule"/>
</dbReference>
<dbReference type="GO" id="GO:0000287">
    <property type="term" value="F:magnesium ion binding"/>
    <property type="evidence" value="ECO:0007669"/>
    <property type="project" value="UniProtKB-UniRule"/>
</dbReference>
<dbReference type="GO" id="GO:0050427">
    <property type="term" value="P:3'-phosphoadenosine 5'-phosphosulfate metabolic process"/>
    <property type="evidence" value="ECO:0007669"/>
    <property type="project" value="TreeGrafter"/>
</dbReference>
<dbReference type="GO" id="GO:0046854">
    <property type="term" value="P:phosphatidylinositol phosphate biosynthetic process"/>
    <property type="evidence" value="ECO:0007669"/>
    <property type="project" value="InterPro"/>
</dbReference>
<dbReference type="GO" id="GO:0000103">
    <property type="term" value="P:sulfate assimilation"/>
    <property type="evidence" value="ECO:0007669"/>
    <property type="project" value="TreeGrafter"/>
</dbReference>
<dbReference type="CDD" id="cd01638">
    <property type="entry name" value="CysQ"/>
    <property type="match status" value="1"/>
</dbReference>
<dbReference type="FunFam" id="3.30.540.10:FF:000007">
    <property type="entry name" value="3'(2'),5'-bisphosphate nucleotidase CysQ"/>
    <property type="match status" value="1"/>
</dbReference>
<dbReference type="FunFam" id="3.40.190.80:FF:000005">
    <property type="entry name" value="3'(2'),5'-bisphosphate nucleotidase CysQ"/>
    <property type="match status" value="1"/>
</dbReference>
<dbReference type="Gene3D" id="3.40.190.80">
    <property type="match status" value="1"/>
</dbReference>
<dbReference type="Gene3D" id="3.30.540.10">
    <property type="entry name" value="Fructose-1,6-Bisphosphatase, subunit A, domain 1"/>
    <property type="match status" value="1"/>
</dbReference>
<dbReference type="HAMAP" id="MF_02095">
    <property type="entry name" value="CysQ"/>
    <property type="match status" value="1"/>
</dbReference>
<dbReference type="InterPro" id="IPR006240">
    <property type="entry name" value="CysQ"/>
</dbReference>
<dbReference type="InterPro" id="IPR050725">
    <property type="entry name" value="CysQ/Inositol_MonoPase"/>
</dbReference>
<dbReference type="InterPro" id="IPR020583">
    <property type="entry name" value="Inositol_monoP_metal-BS"/>
</dbReference>
<dbReference type="InterPro" id="IPR000760">
    <property type="entry name" value="Inositol_monophosphatase-like"/>
</dbReference>
<dbReference type="InterPro" id="IPR020550">
    <property type="entry name" value="Inositol_monophosphatase_CS"/>
</dbReference>
<dbReference type="NCBIfam" id="TIGR01331">
    <property type="entry name" value="bisphos_cysQ"/>
    <property type="match status" value="1"/>
</dbReference>
<dbReference type="NCBIfam" id="NF008182">
    <property type="entry name" value="PRK10931.1"/>
    <property type="match status" value="1"/>
</dbReference>
<dbReference type="PANTHER" id="PTHR43028">
    <property type="entry name" value="3'(2'),5'-BISPHOSPHATE NUCLEOTIDASE 1"/>
    <property type="match status" value="1"/>
</dbReference>
<dbReference type="PANTHER" id="PTHR43028:SF5">
    <property type="entry name" value="3'(2'),5'-BISPHOSPHATE NUCLEOTIDASE 1"/>
    <property type="match status" value="1"/>
</dbReference>
<dbReference type="Pfam" id="PF00459">
    <property type="entry name" value="Inositol_P"/>
    <property type="match status" value="1"/>
</dbReference>
<dbReference type="SUPFAM" id="SSF56655">
    <property type="entry name" value="Carbohydrate phosphatase"/>
    <property type="match status" value="1"/>
</dbReference>
<dbReference type="PROSITE" id="PS00629">
    <property type="entry name" value="IMP_1"/>
    <property type="match status" value="1"/>
</dbReference>
<dbReference type="PROSITE" id="PS00630">
    <property type="entry name" value="IMP_2"/>
    <property type="match status" value="1"/>
</dbReference>
<comment type="function">
    <text evidence="1">Converts adenosine-3',5'-bisphosphate (PAP) to AMP.</text>
</comment>
<comment type="catalytic activity">
    <reaction evidence="1">
        <text>adenosine 3',5'-bisphosphate + H2O = AMP + phosphate</text>
        <dbReference type="Rhea" id="RHEA:10040"/>
        <dbReference type="ChEBI" id="CHEBI:15377"/>
        <dbReference type="ChEBI" id="CHEBI:43474"/>
        <dbReference type="ChEBI" id="CHEBI:58343"/>
        <dbReference type="ChEBI" id="CHEBI:456215"/>
        <dbReference type="EC" id="3.1.3.7"/>
    </reaction>
</comment>
<comment type="cofactor">
    <cofactor evidence="1">
        <name>Mg(2+)</name>
        <dbReference type="ChEBI" id="CHEBI:18420"/>
    </cofactor>
</comment>
<comment type="subcellular location">
    <subcellularLocation>
        <location evidence="1">Cell inner membrane</location>
        <topology evidence="1">Peripheral membrane protein</topology>
        <orientation evidence="1">Cytoplasmic side</orientation>
    </subcellularLocation>
</comment>
<comment type="similarity">
    <text evidence="1 2">Belongs to the inositol monophosphatase superfamily. CysQ family.</text>
</comment>
<gene>
    <name evidence="1" type="primary">cysQ</name>
    <name type="ordered locus">Z5825</name>
    <name type="ordered locus">ECs5192</name>
</gene>
<name>CYSQ_ECO57</name>
<sequence length="246" mass="27160">MLDQVCQLARNAGDAIMQVYDGAKPMDVVSKADNSPVTAADIAAHTVIMDGLRTLTPDIPVLSEEDPPGWEVRQHWQRYWLVDPLDGTKEFIKRNGEFTVNIALIDHGKPILGVVYAPVMNVMYSAAEGKAWKEECGVRKQIQVRDARPPLVVISRSHADAELKEYLQQLGEHQTTSIGSSLKFCLVAEGQAQLYPRFGPTNIWDTAAGHAVAAAAGAHVHDWQGKPLDYTPRESFLNPGFRVSIY</sequence>
<accession>Q8XCG6</accession>
<feature type="chain" id="PRO_0000142543" description="3'(2'),5'-bisphosphate nucleotidase CysQ">
    <location>
        <begin position="1"/>
        <end position="246"/>
    </location>
</feature>
<feature type="binding site" evidence="1">
    <location>
        <position position="64"/>
    </location>
    <ligand>
        <name>Mg(2+)</name>
        <dbReference type="ChEBI" id="CHEBI:18420"/>
        <label>1</label>
    </ligand>
</feature>
<feature type="binding site" evidence="1">
    <location>
        <position position="64"/>
    </location>
    <ligand>
        <name>substrate</name>
    </ligand>
</feature>
<feature type="binding site" evidence="1">
    <location>
        <position position="83"/>
    </location>
    <ligand>
        <name>Mg(2+)</name>
        <dbReference type="ChEBI" id="CHEBI:18420"/>
        <label>1</label>
    </ligand>
</feature>
<feature type="binding site" evidence="1">
    <location>
        <position position="83"/>
    </location>
    <ligand>
        <name>Mg(2+)</name>
        <dbReference type="ChEBI" id="CHEBI:18420"/>
        <label>2</label>
    </ligand>
</feature>
<feature type="binding site" evidence="1">
    <location>
        <begin position="85"/>
        <end position="88"/>
    </location>
    <ligand>
        <name>substrate</name>
    </ligand>
</feature>
<feature type="binding site" evidence="1">
    <location>
        <position position="85"/>
    </location>
    <ligand>
        <name>Mg(2+)</name>
        <dbReference type="ChEBI" id="CHEBI:18420"/>
        <label>1</label>
    </ligand>
</feature>
<feature type="binding site" evidence="1">
    <location>
        <position position="86"/>
    </location>
    <ligand>
        <name>Mg(2+)</name>
        <dbReference type="ChEBI" id="CHEBI:18420"/>
        <label>2</label>
    </ligand>
</feature>
<feature type="binding site" evidence="1">
    <location>
        <position position="205"/>
    </location>
    <ligand>
        <name>Mg(2+)</name>
        <dbReference type="ChEBI" id="CHEBI:18420"/>
        <label>2</label>
    </ligand>
</feature>
<feature type="binding site" evidence="1">
    <location>
        <position position="205"/>
    </location>
    <ligand>
        <name>substrate</name>
    </ligand>
</feature>
<organism>
    <name type="scientific">Escherichia coli O157:H7</name>
    <dbReference type="NCBI Taxonomy" id="83334"/>
    <lineage>
        <taxon>Bacteria</taxon>
        <taxon>Pseudomonadati</taxon>
        <taxon>Pseudomonadota</taxon>
        <taxon>Gammaproteobacteria</taxon>
        <taxon>Enterobacterales</taxon>
        <taxon>Enterobacteriaceae</taxon>
        <taxon>Escherichia</taxon>
    </lineage>
</organism>
<keyword id="KW-0997">Cell inner membrane</keyword>
<keyword id="KW-1003">Cell membrane</keyword>
<keyword id="KW-0378">Hydrolase</keyword>
<keyword id="KW-0460">Magnesium</keyword>
<keyword id="KW-0472">Membrane</keyword>
<keyword id="KW-0479">Metal-binding</keyword>
<keyword id="KW-1185">Reference proteome</keyword>
<proteinExistence type="inferred from homology"/>